<name>YCGR_NITMU</name>
<comment type="function">
    <text evidence="1">Acts as a flagellar brake, regulating swimming and swarming in a bis-(3'-5') cyclic diguanylic acid (c-di-GMP)-dependent manner. Binds 1 c-di-GMP dimer per subunit. Increasing levels of c-di-GMP lead to decreased motility.</text>
</comment>
<comment type="subunit">
    <text evidence="1">Monomer. Interacts with the flagellar basal bodies.</text>
</comment>
<comment type="subcellular location">
    <subcellularLocation>
        <location evidence="1">Bacterial flagellum basal body</location>
    </subcellularLocation>
</comment>
<comment type="similarity">
    <text evidence="1">Belongs to the YcgR family.</text>
</comment>
<proteinExistence type="inferred from homology"/>
<sequence>MSRTWIDIMADSKPDLPDNNKKYRISSKSGILSVLRVMIRNNSQATCYFGDAGSFFPTALLNLDSQRGEMVLDYGPNEEINQQALQVEKWNVVAFPNQVKVQFSCQQIGKTEFEGRNAFLAQIPTSLLRMQKREYYRVATPTTAPVKCVIPLLLGKSPSTVEVLLQDLSCGGMAVIDSNGRSNFEEGSVYENCCIVLPDIGTVNVSMRIIRVEPADTGFVHDLQSQRVSCEFADAGENALSLIQRYITRLELEQKRAS</sequence>
<organism>
    <name type="scientific">Nitrosospira multiformis (strain ATCC 25196 / NCIMB 11849 / C 71)</name>
    <dbReference type="NCBI Taxonomy" id="323848"/>
    <lineage>
        <taxon>Bacteria</taxon>
        <taxon>Pseudomonadati</taxon>
        <taxon>Pseudomonadota</taxon>
        <taxon>Betaproteobacteria</taxon>
        <taxon>Nitrosomonadales</taxon>
        <taxon>Nitrosomonadaceae</taxon>
        <taxon>Nitrosospira</taxon>
    </lineage>
</organism>
<accession>Q2Y8L4</accession>
<reference key="1">
    <citation type="submission" date="2005-08" db="EMBL/GenBank/DDBJ databases">
        <title>Complete sequence of chromosome 1 of Nitrosospira multiformis ATCC 25196.</title>
        <authorList>
            <person name="Copeland A."/>
            <person name="Lucas S."/>
            <person name="Lapidus A."/>
            <person name="Barry K."/>
            <person name="Detter J.C."/>
            <person name="Glavina T."/>
            <person name="Hammon N."/>
            <person name="Israni S."/>
            <person name="Pitluck S."/>
            <person name="Chain P."/>
            <person name="Malfatti S."/>
            <person name="Shin M."/>
            <person name="Vergez L."/>
            <person name="Schmutz J."/>
            <person name="Larimer F."/>
            <person name="Land M."/>
            <person name="Hauser L."/>
            <person name="Kyrpides N."/>
            <person name="Lykidis A."/>
            <person name="Richardson P."/>
        </authorList>
    </citation>
    <scope>NUCLEOTIDE SEQUENCE [LARGE SCALE GENOMIC DNA]</scope>
    <source>
        <strain>ATCC 25196 / NCIMB 11849 / C 71</strain>
    </source>
</reference>
<dbReference type="EMBL" id="CP000103">
    <property type="protein sequence ID" value="ABB74907.1"/>
    <property type="molecule type" value="Genomic_DNA"/>
</dbReference>
<dbReference type="SMR" id="Q2Y8L4"/>
<dbReference type="STRING" id="323848.Nmul_A1606"/>
<dbReference type="KEGG" id="nmu:Nmul_A1606"/>
<dbReference type="eggNOG" id="COG5581">
    <property type="taxonomic scope" value="Bacteria"/>
</dbReference>
<dbReference type="HOGENOM" id="CLU_086025_0_0_4"/>
<dbReference type="OrthoDB" id="5572581at2"/>
<dbReference type="Proteomes" id="UP000002718">
    <property type="component" value="Chromosome"/>
</dbReference>
<dbReference type="GO" id="GO:0009425">
    <property type="term" value="C:bacterial-type flagellum basal body"/>
    <property type="evidence" value="ECO:0007669"/>
    <property type="project" value="UniProtKB-SubCell"/>
</dbReference>
<dbReference type="GO" id="GO:0035438">
    <property type="term" value="F:cyclic-di-GMP binding"/>
    <property type="evidence" value="ECO:0007669"/>
    <property type="project" value="UniProtKB-UniRule"/>
</dbReference>
<dbReference type="GO" id="GO:0071973">
    <property type="term" value="P:bacterial-type flagellum-dependent cell motility"/>
    <property type="evidence" value="ECO:0007669"/>
    <property type="project" value="UniProtKB-UniRule"/>
</dbReference>
<dbReference type="GO" id="GO:0071945">
    <property type="term" value="P:regulation of bacterial-type flagellum-dependent cell motility by regulation of motor speed"/>
    <property type="evidence" value="ECO:0007669"/>
    <property type="project" value="UniProtKB-UniRule"/>
</dbReference>
<dbReference type="Gene3D" id="2.30.110.10">
    <property type="entry name" value="Electron Transport, Fmn-binding Protein, Chain A"/>
    <property type="match status" value="1"/>
</dbReference>
<dbReference type="Gene3D" id="2.40.10.220">
    <property type="entry name" value="predicted glycosyltransferase like domains"/>
    <property type="match status" value="1"/>
</dbReference>
<dbReference type="HAMAP" id="MF_01457">
    <property type="entry name" value="YcgR"/>
    <property type="match status" value="1"/>
</dbReference>
<dbReference type="InterPro" id="IPR009875">
    <property type="entry name" value="PilZ_domain"/>
</dbReference>
<dbReference type="InterPro" id="IPR012349">
    <property type="entry name" value="Split_barrel_FMN-bd"/>
</dbReference>
<dbReference type="InterPro" id="IPR023787">
    <property type="entry name" value="T3SS_YcgR"/>
</dbReference>
<dbReference type="InterPro" id="IPR009926">
    <property type="entry name" value="T3SS_YcgR_PilZN"/>
</dbReference>
<dbReference type="Pfam" id="PF07238">
    <property type="entry name" value="PilZ"/>
    <property type="match status" value="1"/>
</dbReference>
<dbReference type="Pfam" id="PF07317">
    <property type="entry name" value="PilZN"/>
    <property type="match status" value="1"/>
</dbReference>
<evidence type="ECO:0000255" key="1">
    <source>
        <dbReference type="HAMAP-Rule" id="MF_01457"/>
    </source>
</evidence>
<keyword id="KW-0975">Bacterial flagellum</keyword>
<keyword id="KW-0973">c-di-GMP</keyword>
<keyword id="KW-0547">Nucleotide-binding</keyword>
<keyword id="KW-1185">Reference proteome</keyword>
<feature type="chain" id="PRO_0000395280" description="Flagellar brake protein YcgR">
    <location>
        <begin position="1"/>
        <end position="258"/>
    </location>
</feature>
<feature type="domain" description="PilZ" evidence="1">
    <location>
        <begin position="131"/>
        <end position="248"/>
    </location>
</feature>
<protein>
    <recommendedName>
        <fullName evidence="1">Flagellar brake protein YcgR</fullName>
    </recommendedName>
    <alternativeName>
        <fullName evidence="1">Cyclic di-GMP binding protein YcgR</fullName>
    </alternativeName>
</protein>
<gene>
    <name evidence="1" type="primary">ycgR</name>
    <name type="ordered locus">Nmul_A1606</name>
</gene>